<reference key="1">
    <citation type="journal article" date="2000" name="Nature">
        <title>The genome sequence of the thermoacidophilic scavenger Thermoplasma acidophilum.</title>
        <authorList>
            <person name="Ruepp A."/>
            <person name="Graml W."/>
            <person name="Santos-Martinez M.-L."/>
            <person name="Koretke K.K."/>
            <person name="Volker C."/>
            <person name="Mewes H.-W."/>
            <person name="Frishman D."/>
            <person name="Stocker S."/>
            <person name="Lupas A.N."/>
            <person name="Baumeister W."/>
        </authorList>
    </citation>
    <scope>NUCLEOTIDE SEQUENCE [LARGE SCALE GENOMIC DNA]</scope>
    <source>
        <strain>ATCC 25905 / DSM 1728 / JCM 9062 / NBRC 15155 / AMRC-C165</strain>
    </source>
</reference>
<accession>Q9HL75</accession>
<sequence length="273" mass="31073">MKLIENWFSERYSDNLQLSFRVSDQLLSIKTDYQRIDLFDTYDFGKLLAIDGTVQLTERDEFIYHELITMVPYHLTPRPPENALIIGGGDGGAARRLIDLGLKHIVNVEIDDQVVEVSKRFFPSLSSAFNDSHVKLLIQDGIKYVKNTSEKFDLIIIDSTDPEGPAEGLFSKDFYNDTRKIMNEGAVIVSQSGSPFYQPKAIKLAYSGMREVFSDVRVYTGFIPTYPSGFWSFTVASPWTMKPRPVNMSGKYFNADVMEGSFRLPQFVKELIT</sequence>
<dbReference type="EC" id="2.5.1.16" evidence="1"/>
<dbReference type="EMBL" id="AL445064">
    <property type="protein sequence ID" value="CAC11499.1"/>
    <property type="molecule type" value="Genomic_DNA"/>
</dbReference>
<dbReference type="RefSeq" id="WP_010900783.1">
    <property type="nucleotide sequence ID" value="NC_002578.1"/>
</dbReference>
<dbReference type="SMR" id="Q9HL75"/>
<dbReference type="FunCoup" id="Q9HL75">
    <property type="interactions" value="173"/>
</dbReference>
<dbReference type="STRING" id="273075.gene:9571573"/>
<dbReference type="PaxDb" id="273075-Ta0355"/>
<dbReference type="EnsemblBacteria" id="CAC11499">
    <property type="protein sequence ID" value="CAC11499"/>
    <property type="gene ID" value="CAC11499"/>
</dbReference>
<dbReference type="KEGG" id="tac:Ta0355"/>
<dbReference type="eggNOG" id="arCOG00050">
    <property type="taxonomic scope" value="Archaea"/>
</dbReference>
<dbReference type="HOGENOM" id="CLU_048199_1_0_2"/>
<dbReference type="InParanoid" id="Q9HL75"/>
<dbReference type="OrthoDB" id="10538at2157"/>
<dbReference type="UniPathway" id="UPA00248">
    <property type="reaction ID" value="UER00314"/>
</dbReference>
<dbReference type="Proteomes" id="UP000001024">
    <property type="component" value="Chromosome"/>
</dbReference>
<dbReference type="GO" id="GO:0005737">
    <property type="term" value="C:cytoplasm"/>
    <property type="evidence" value="ECO:0007669"/>
    <property type="project" value="UniProtKB-SubCell"/>
</dbReference>
<dbReference type="GO" id="GO:0004766">
    <property type="term" value="F:spermidine synthase activity"/>
    <property type="evidence" value="ECO:0007669"/>
    <property type="project" value="UniProtKB-UniRule"/>
</dbReference>
<dbReference type="GO" id="GO:0008295">
    <property type="term" value="P:spermidine biosynthetic process"/>
    <property type="evidence" value="ECO:0007669"/>
    <property type="project" value="UniProtKB-UniRule"/>
</dbReference>
<dbReference type="CDD" id="cd02440">
    <property type="entry name" value="AdoMet_MTases"/>
    <property type="match status" value="1"/>
</dbReference>
<dbReference type="Gene3D" id="2.30.140.10">
    <property type="entry name" value="Spermidine synthase, tetramerisation domain"/>
    <property type="match status" value="1"/>
</dbReference>
<dbReference type="Gene3D" id="3.40.50.150">
    <property type="entry name" value="Vaccinia Virus protein VP39"/>
    <property type="match status" value="1"/>
</dbReference>
<dbReference type="HAMAP" id="MF_00198">
    <property type="entry name" value="Spermidine_synth"/>
    <property type="match status" value="1"/>
</dbReference>
<dbReference type="InterPro" id="IPR030374">
    <property type="entry name" value="PABS"/>
</dbReference>
<dbReference type="InterPro" id="IPR029063">
    <property type="entry name" value="SAM-dependent_MTases_sf"/>
</dbReference>
<dbReference type="InterPro" id="IPR001045">
    <property type="entry name" value="Spermi_synthase"/>
</dbReference>
<dbReference type="InterPro" id="IPR035246">
    <property type="entry name" value="Spermidine_synt_N"/>
</dbReference>
<dbReference type="InterPro" id="IPR037163">
    <property type="entry name" value="Spermidine_synt_N_sf"/>
</dbReference>
<dbReference type="NCBIfam" id="NF002010">
    <property type="entry name" value="PRK00811.1"/>
    <property type="match status" value="1"/>
</dbReference>
<dbReference type="NCBIfam" id="TIGR00417">
    <property type="entry name" value="speE"/>
    <property type="match status" value="1"/>
</dbReference>
<dbReference type="PANTHER" id="PTHR11558:SF11">
    <property type="entry name" value="SPERMIDINE SYNTHASE"/>
    <property type="match status" value="1"/>
</dbReference>
<dbReference type="PANTHER" id="PTHR11558">
    <property type="entry name" value="SPERMIDINE/SPERMINE SYNTHASE"/>
    <property type="match status" value="1"/>
</dbReference>
<dbReference type="Pfam" id="PF17284">
    <property type="entry name" value="Spermine_synt_N"/>
    <property type="match status" value="1"/>
</dbReference>
<dbReference type="Pfam" id="PF01564">
    <property type="entry name" value="Spermine_synth"/>
    <property type="match status" value="1"/>
</dbReference>
<dbReference type="SUPFAM" id="SSF53335">
    <property type="entry name" value="S-adenosyl-L-methionine-dependent methyltransferases"/>
    <property type="match status" value="1"/>
</dbReference>
<dbReference type="PROSITE" id="PS51006">
    <property type="entry name" value="PABS_2"/>
    <property type="match status" value="1"/>
</dbReference>
<comment type="function">
    <text evidence="1">Catalyzes the irreversible transfer of a propylamine group from the amino donor S-adenosylmethioninamine (decarboxy-AdoMet) to putrescine (1,4-diaminobutane) to yield spermidine.</text>
</comment>
<comment type="catalytic activity">
    <reaction evidence="1">
        <text>S-adenosyl 3-(methylsulfanyl)propylamine + putrescine = S-methyl-5'-thioadenosine + spermidine + H(+)</text>
        <dbReference type="Rhea" id="RHEA:12721"/>
        <dbReference type="ChEBI" id="CHEBI:15378"/>
        <dbReference type="ChEBI" id="CHEBI:17509"/>
        <dbReference type="ChEBI" id="CHEBI:57443"/>
        <dbReference type="ChEBI" id="CHEBI:57834"/>
        <dbReference type="ChEBI" id="CHEBI:326268"/>
        <dbReference type="EC" id="2.5.1.16"/>
    </reaction>
</comment>
<comment type="pathway">
    <text evidence="1">Amine and polyamine biosynthesis; spermidine biosynthesis; spermidine from putrescine: step 1/1.</text>
</comment>
<comment type="subunit">
    <text evidence="1">Homodimer or homotetramer.</text>
</comment>
<comment type="subcellular location">
    <subcellularLocation>
        <location evidence="1">Cytoplasm</location>
    </subcellularLocation>
</comment>
<comment type="similarity">
    <text evidence="1">Belongs to the spermidine/spermine synthase family.</text>
</comment>
<gene>
    <name evidence="1" type="primary">speE</name>
    <name type="ordered locus">Ta0355</name>
</gene>
<keyword id="KW-0963">Cytoplasm</keyword>
<keyword id="KW-0620">Polyamine biosynthesis</keyword>
<keyword id="KW-1185">Reference proteome</keyword>
<keyword id="KW-0745">Spermidine biosynthesis</keyword>
<keyword id="KW-0808">Transferase</keyword>
<name>SPEE_THEAC</name>
<organism>
    <name type="scientific">Thermoplasma acidophilum (strain ATCC 25905 / DSM 1728 / JCM 9062 / NBRC 15155 / AMRC-C165)</name>
    <dbReference type="NCBI Taxonomy" id="273075"/>
    <lineage>
        <taxon>Archaea</taxon>
        <taxon>Methanobacteriati</taxon>
        <taxon>Thermoplasmatota</taxon>
        <taxon>Thermoplasmata</taxon>
        <taxon>Thermoplasmatales</taxon>
        <taxon>Thermoplasmataceae</taxon>
        <taxon>Thermoplasma</taxon>
    </lineage>
</organism>
<proteinExistence type="inferred from homology"/>
<protein>
    <recommendedName>
        <fullName evidence="1">Polyamine aminopropyltransferase</fullName>
    </recommendedName>
    <alternativeName>
        <fullName evidence="1">Putrescine aminopropyltransferase</fullName>
        <shortName evidence="1">PAPT</shortName>
    </alternativeName>
    <alternativeName>
        <fullName evidence="1">Spermidine synthase</fullName>
        <shortName evidence="1">SPDS</shortName>
        <shortName evidence="1">SPDSY</shortName>
        <ecNumber evidence="1">2.5.1.16</ecNumber>
    </alternativeName>
</protein>
<evidence type="ECO:0000255" key="1">
    <source>
        <dbReference type="HAMAP-Rule" id="MF_00198"/>
    </source>
</evidence>
<feature type="chain" id="PRO_0000156536" description="Polyamine aminopropyltransferase">
    <location>
        <begin position="1"/>
        <end position="273"/>
    </location>
</feature>
<feature type="domain" description="PABS" evidence="1">
    <location>
        <begin position="5"/>
        <end position="238"/>
    </location>
</feature>
<feature type="active site" description="Proton acceptor" evidence="1">
    <location>
        <position position="158"/>
    </location>
</feature>
<feature type="binding site" evidence="1">
    <location>
        <position position="34"/>
    </location>
    <ligand>
        <name>S-methyl-5'-thioadenosine</name>
        <dbReference type="ChEBI" id="CHEBI:17509"/>
    </ligand>
</feature>
<feature type="binding site" evidence="1">
    <location>
        <position position="65"/>
    </location>
    <ligand>
        <name>spermidine</name>
        <dbReference type="ChEBI" id="CHEBI:57834"/>
    </ligand>
</feature>
<feature type="binding site" evidence="1">
    <location>
        <position position="90"/>
    </location>
    <ligand>
        <name>spermidine</name>
        <dbReference type="ChEBI" id="CHEBI:57834"/>
    </ligand>
</feature>
<feature type="binding site" evidence="1">
    <location>
        <position position="109"/>
    </location>
    <ligand>
        <name>S-methyl-5'-thioadenosine</name>
        <dbReference type="ChEBI" id="CHEBI:17509"/>
    </ligand>
</feature>
<feature type="binding site" evidence="1">
    <location>
        <begin position="140"/>
        <end position="141"/>
    </location>
    <ligand>
        <name>S-methyl-5'-thioadenosine</name>
        <dbReference type="ChEBI" id="CHEBI:17509"/>
    </ligand>
</feature>
<feature type="binding site" evidence="1">
    <location>
        <begin position="158"/>
        <end position="161"/>
    </location>
    <ligand>
        <name>spermidine</name>
        <dbReference type="ChEBI" id="CHEBI:57834"/>
    </ligand>
</feature>
<feature type="binding site" evidence="1">
    <location>
        <position position="165"/>
    </location>
    <ligand>
        <name>S-methyl-5'-thioadenosine</name>
        <dbReference type="ChEBI" id="CHEBI:17509"/>
    </ligand>
</feature>